<keyword id="KW-0004">4Fe-4S</keyword>
<keyword id="KW-0028">Amino-acid biosynthesis</keyword>
<keyword id="KW-0100">Branched-chain amino acid biosynthesis</keyword>
<keyword id="KW-0408">Iron</keyword>
<keyword id="KW-0411">Iron-sulfur</keyword>
<keyword id="KW-0432">Leucine biosynthesis</keyword>
<keyword id="KW-0456">Lyase</keyword>
<keyword id="KW-0479">Metal-binding</keyword>
<reference key="1">
    <citation type="journal article" date="2008" name="BMC Genomics">
        <title>The genome of Aeromonas salmonicida subsp. salmonicida A449: insights into the evolution of a fish pathogen.</title>
        <authorList>
            <person name="Reith M.E."/>
            <person name="Singh R.K."/>
            <person name="Curtis B."/>
            <person name="Boyd J.M."/>
            <person name="Bouevitch A."/>
            <person name="Kimball J."/>
            <person name="Munholland J."/>
            <person name="Murphy C."/>
            <person name="Sarty D."/>
            <person name="Williams J."/>
            <person name="Nash J.H."/>
            <person name="Johnson S.C."/>
            <person name="Brown L.L."/>
        </authorList>
    </citation>
    <scope>NUCLEOTIDE SEQUENCE [LARGE SCALE GENOMIC DNA]</scope>
    <source>
        <strain>A449</strain>
    </source>
</reference>
<protein>
    <recommendedName>
        <fullName evidence="1">3-isopropylmalate dehydratase large subunit</fullName>
        <ecNumber evidence="1">4.2.1.33</ecNumber>
    </recommendedName>
    <alternativeName>
        <fullName evidence="1">Alpha-IPM isomerase</fullName>
        <shortName evidence="1">IPMI</shortName>
    </alternativeName>
    <alternativeName>
        <fullName evidence="1">Isopropylmalate isomerase</fullName>
    </alternativeName>
</protein>
<sequence>MAKTLYQKVFDAHVVREVDGETPLIYIDRHLVHEVTSPQAFDGLRAMNRPLRRPDLTWATMDHNVSTTTKDIAASGEMARIQMETLADNCKEFGVRLYDLNHKYQGIVHVMGPELGITLPGTTIVCGDSHTATHGAFGSLAFGIGTSEVEHVMATQTLKQGRAKTMRISVNGKLAEGISAKDVVLAIIGQVGHAGGTGYVVEFAGEAIAGLSMEGRMTVCNMAIELGAKAGMIAPDQTTIDYIRGKEFAPKGESLDQAIAYWLSLKSDQGAHFDAEVILDAADIAPQVTWGTNPGQVIAVNEPIPAPESFSDLMEQQSARKALAYMDLQPGQKLTDVAIDKVFIGSCTNSRIEDLRAAAAIARGRKVAAGVQALVVPGSEQVKAQAEAEGLDKIFLEAGFEWRLPGCSMCLAMNNDRLQPGERCASTSNRNFEGRQGRAGRTHLVSPAMAAAAAVTGRFADIRAL</sequence>
<proteinExistence type="inferred from homology"/>
<organism>
    <name type="scientific">Aeromonas salmonicida (strain A449)</name>
    <dbReference type="NCBI Taxonomy" id="382245"/>
    <lineage>
        <taxon>Bacteria</taxon>
        <taxon>Pseudomonadati</taxon>
        <taxon>Pseudomonadota</taxon>
        <taxon>Gammaproteobacteria</taxon>
        <taxon>Aeromonadales</taxon>
        <taxon>Aeromonadaceae</taxon>
        <taxon>Aeromonas</taxon>
    </lineage>
</organism>
<gene>
    <name evidence="1" type="primary">leuC</name>
    <name type="ordered locus">ASA_3411</name>
</gene>
<comment type="function">
    <text evidence="1">Catalyzes the isomerization between 2-isopropylmalate and 3-isopropylmalate, via the formation of 2-isopropylmaleate.</text>
</comment>
<comment type="catalytic activity">
    <reaction evidence="1">
        <text>(2R,3S)-3-isopropylmalate = (2S)-2-isopropylmalate</text>
        <dbReference type="Rhea" id="RHEA:32287"/>
        <dbReference type="ChEBI" id="CHEBI:1178"/>
        <dbReference type="ChEBI" id="CHEBI:35121"/>
        <dbReference type="EC" id="4.2.1.33"/>
    </reaction>
</comment>
<comment type="cofactor">
    <cofactor evidence="1">
        <name>[4Fe-4S] cluster</name>
        <dbReference type="ChEBI" id="CHEBI:49883"/>
    </cofactor>
    <text evidence="1">Binds 1 [4Fe-4S] cluster per subunit.</text>
</comment>
<comment type="pathway">
    <text evidence="1">Amino-acid biosynthesis; L-leucine biosynthesis; L-leucine from 3-methyl-2-oxobutanoate: step 2/4.</text>
</comment>
<comment type="subunit">
    <text evidence="1">Heterodimer of LeuC and LeuD.</text>
</comment>
<comment type="similarity">
    <text evidence="1">Belongs to the aconitase/IPM isomerase family. LeuC type 1 subfamily.</text>
</comment>
<name>LEUC_AERS4</name>
<feature type="chain" id="PRO_1000063521" description="3-isopropylmalate dehydratase large subunit">
    <location>
        <begin position="1"/>
        <end position="465"/>
    </location>
</feature>
<feature type="binding site" evidence="1">
    <location>
        <position position="347"/>
    </location>
    <ligand>
        <name>[4Fe-4S] cluster</name>
        <dbReference type="ChEBI" id="CHEBI:49883"/>
    </ligand>
</feature>
<feature type="binding site" evidence="1">
    <location>
        <position position="407"/>
    </location>
    <ligand>
        <name>[4Fe-4S] cluster</name>
        <dbReference type="ChEBI" id="CHEBI:49883"/>
    </ligand>
</feature>
<feature type="binding site" evidence="1">
    <location>
        <position position="410"/>
    </location>
    <ligand>
        <name>[4Fe-4S] cluster</name>
        <dbReference type="ChEBI" id="CHEBI:49883"/>
    </ligand>
</feature>
<evidence type="ECO:0000255" key="1">
    <source>
        <dbReference type="HAMAP-Rule" id="MF_01026"/>
    </source>
</evidence>
<accession>A4SR64</accession>
<dbReference type="EC" id="4.2.1.33" evidence="1"/>
<dbReference type="EMBL" id="CP000644">
    <property type="protein sequence ID" value="ABO91386.1"/>
    <property type="molecule type" value="Genomic_DNA"/>
</dbReference>
<dbReference type="RefSeq" id="WP_005311587.1">
    <property type="nucleotide sequence ID" value="NC_009348.1"/>
</dbReference>
<dbReference type="SMR" id="A4SR64"/>
<dbReference type="STRING" id="29491.GCA_000820065_03806"/>
<dbReference type="KEGG" id="asa:ASA_3411"/>
<dbReference type="eggNOG" id="COG0065">
    <property type="taxonomic scope" value="Bacteria"/>
</dbReference>
<dbReference type="HOGENOM" id="CLU_006714_3_4_6"/>
<dbReference type="UniPathway" id="UPA00048">
    <property type="reaction ID" value="UER00071"/>
</dbReference>
<dbReference type="Proteomes" id="UP000000225">
    <property type="component" value="Chromosome"/>
</dbReference>
<dbReference type="GO" id="GO:0003861">
    <property type="term" value="F:3-isopropylmalate dehydratase activity"/>
    <property type="evidence" value="ECO:0007669"/>
    <property type="project" value="UniProtKB-UniRule"/>
</dbReference>
<dbReference type="GO" id="GO:0051539">
    <property type="term" value="F:4 iron, 4 sulfur cluster binding"/>
    <property type="evidence" value="ECO:0007669"/>
    <property type="project" value="UniProtKB-KW"/>
</dbReference>
<dbReference type="GO" id="GO:0046872">
    <property type="term" value="F:metal ion binding"/>
    <property type="evidence" value="ECO:0007669"/>
    <property type="project" value="UniProtKB-KW"/>
</dbReference>
<dbReference type="GO" id="GO:0009098">
    <property type="term" value="P:L-leucine biosynthetic process"/>
    <property type="evidence" value="ECO:0007669"/>
    <property type="project" value="UniProtKB-UniRule"/>
</dbReference>
<dbReference type="CDD" id="cd01583">
    <property type="entry name" value="IPMI"/>
    <property type="match status" value="1"/>
</dbReference>
<dbReference type="FunFam" id="3.30.499.10:FF:000006">
    <property type="entry name" value="3-isopropylmalate dehydratase large subunit"/>
    <property type="match status" value="1"/>
</dbReference>
<dbReference type="FunFam" id="3.30.499.10:FF:000007">
    <property type="entry name" value="3-isopropylmalate dehydratase large subunit"/>
    <property type="match status" value="1"/>
</dbReference>
<dbReference type="Gene3D" id="3.30.499.10">
    <property type="entry name" value="Aconitase, domain 3"/>
    <property type="match status" value="2"/>
</dbReference>
<dbReference type="HAMAP" id="MF_01026">
    <property type="entry name" value="LeuC_type1"/>
    <property type="match status" value="1"/>
</dbReference>
<dbReference type="InterPro" id="IPR004430">
    <property type="entry name" value="3-IsopropMal_deHydase_lsu"/>
</dbReference>
<dbReference type="InterPro" id="IPR015931">
    <property type="entry name" value="Acnase/IPM_dHydase_lsu_aba_1/3"/>
</dbReference>
<dbReference type="InterPro" id="IPR001030">
    <property type="entry name" value="Acoase/IPM_deHydtase_lsu_aba"/>
</dbReference>
<dbReference type="InterPro" id="IPR018136">
    <property type="entry name" value="Aconitase_4Fe-4S_BS"/>
</dbReference>
<dbReference type="InterPro" id="IPR036008">
    <property type="entry name" value="Aconitase_4Fe-4S_dom"/>
</dbReference>
<dbReference type="InterPro" id="IPR050067">
    <property type="entry name" value="IPM_dehydratase_rel_enz"/>
</dbReference>
<dbReference type="InterPro" id="IPR033941">
    <property type="entry name" value="IPMI_cat"/>
</dbReference>
<dbReference type="NCBIfam" id="TIGR00170">
    <property type="entry name" value="leuC"/>
    <property type="match status" value="1"/>
</dbReference>
<dbReference type="NCBIfam" id="NF004016">
    <property type="entry name" value="PRK05478.1"/>
    <property type="match status" value="1"/>
</dbReference>
<dbReference type="NCBIfam" id="NF009116">
    <property type="entry name" value="PRK12466.1"/>
    <property type="match status" value="1"/>
</dbReference>
<dbReference type="PANTHER" id="PTHR43822:SF9">
    <property type="entry name" value="3-ISOPROPYLMALATE DEHYDRATASE"/>
    <property type="match status" value="1"/>
</dbReference>
<dbReference type="PANTHER" id="PTHR43822">
    <property type="entry name" value="HOMOACONITASE, MITOCHONDRIAL-RELATED"/>
    <property type="match status" value="1"/>
</dbReference>
<dbReference type="Pfam" id="PF00330">
    <property type="entry name" value="Aconitase"/>
    <property type="match status" value="1"/>
</dbReference>
<dbReference type="PRINTS" id="PR00415">
    <property type="entry name" value="ACONITASE"/>
</dbReference>
<dbReference type="SUPFAM" id="SSF53732">
    <property type="entry name" value="Aconitase iron-sulfur domain"/>
    <property type="match status" value="1"/>
</dbReference>
<dbReference type="PROSITE" id="PS00450">
    <property type="entry name" value="ACONITASE_1"/>
    <property type="match status" value="1"/>
</dbReference>
<dbReference type="PROSITE" id="PS01244">
    <property type="entry name" value="ACONITASE_2"/>
    <property type="match status" value="1"/>
</dbReference>